<proteinExistence type="inferred from homology"/>
<comment type="function">
    <text evidence="1">Transports viral genome to neighboring plant cells directly through plasmosdesmata, without any budding. The movement protein allows efficient cell to cell propagation, by bypassing the host cell wall barrier. Acts by forming a tubular structure at the host plasmodesmata, enlarging it enough to allow free passage of virion capsids (By similarity).</text>
</comment>
<comment type="subcellular location">
    <subcellularLocation>
        <location evidence="1">Host cell junction</location>
        <location evidence="1">Host plasmodesma</location>
    </subcellularLocation>
    <text evidence="1">Assembles into long tubular structures at the surface of the infected protoplast.</text>
</comment>
<comment type="similarity">
    <text evidence="2">Belongs to the cucumovirus movement protein family.</text>
</comment>
<feature type="chain" id="PRO_0000083233" description="Movement protein">
    <location>
        <begin position="1"/>
        <end position="279"/>
    </location>
</feature>
<evidence type="ECO:0000250" key="1"/>
<evidence type="ECO:0000305" key="2"/>
<reference key="1">
    <citation type="submission" date="1997-07" db="EMBL/GenBank/DDBJ databases">
        <authorList>
            <person name="Kim S.H."/>
            <person name="Park Y.I."/>
        </authorList>
    </citation>
    <scope>NUCLEOTIDE SEQUENCE [GENOMIC RNA]</scope>
</reference>
<organism>
    <name type="scientific">Cucumber mosaic virus (strain As)</name>
    <name type="common">CMV</name>
    <dbReference type="NCBI Taxonomy" id="117118"/>
    <lineage>
        <taxon>Viruses</taxon>
        <taxon>Riboviria</taxon>
        <taxon>Orthornavirae</taxon>
        <taxon>Kitrinoviricota</taxon>
        <taxon>Alsuviricetes</taxon>
        <taxon>Martellivirales</taxon>
        <taxon>Bromoviridae</taxon>
        <taxon>Cucumovirus</taxon>
        <taxon>Cucumber mosaic virus</taxon>
    </lineage>
</organism>
<keyword id="KW-1031">Host cell junction</keyword>
<keyword id="KW-0813">Transport</keyword>
<keyword id="KW-0916">Viral movement protein</keyword>
<sequence length="279" mass="30510">MAFQGTSRTLTQQSSAATSDELQKILFSPEAIKKMAAECDLGRHHWMRADNAISVRPLVPEVTHGRIASFFKSGYDAGELCSKGCVSVPQVLCAVTRTVSTDAEGSLRIYLPDLGDKELSPIDKQCVTLHNHHLPALVSFQPTYDCPMETVGNRKRCFAVVIERHGYIGYTGTTASVCSNWQARFSSKNNNYTHIAAGKTLVLPFNRLAEQTKPSAVARLLKSQLNNMGSSQYVLTDSKINQNARSESEELNVESPPAAIGSSVASRFESFRPQVVNGL</sequence>
<dbReference type="EMBL" id="AF013291">
    <property type="protein sequence ID" value="AAB67166.1"/>
    <property type="molecule type" value="Genomic_RNA"/>
</dbReference>
<dbReference type="GO" id="GO:0044219">
    <property type="term" value="C:host cell plasmodesma"/>
    <property type="evidence" value="ECO:0007669"/>
    <property type="project" value="UniProtKB-SubCell"/>
</dbReference>
<dbReference type="GO" id="GO:0046740">
    <property type="term" value="P:transport of virus in host, cell to cell"/>
    <property type="evidence" value="ECO:0007669"/>
    <property type="project" value="UniProtKB-KW"/>
</dbReference>
<dbReference type="InterPro" id="IPR000603">
    <property type="entry name" value="MPV"/>
</dbReference>
<dbReference type="Pfam" id="PF00803">
    <property type="entry name" value="3A"/>
    <property type="match status" value="1"/>
</dbReference>
<accession>O36639</accession>
<protein>
    <recommendedName>
        <fullName>Movement protein</fullName>
        <shortName>MP</shortName>
    </recommendedName>
    <alternativeName>
        <fullName>Protein 3A</fullName>
    </alternativeName>
</protein>
<name>MVP_CMVAS</name>
<organismHost>
    <name type="scientific">Cucumis sativus</name>
    <name type="common">Cucumber</name>
    <dbReference type="NCBI Taxonomy" id="3659"/>
</organismHost>
<organismHost>
    <name type="scientific">Solanum lycopersicum</name>
    <name type="common">Tomato</name>
    <name type="synonym">Lycopersicon esculentum</name>
    <dbReference type="NCBI Taxonomy" id="4081"/>
</organismHost>
<organismHost>
    <name type="scientific">Spinacia oleracea</name>
    <name type="common">Spinach</name>
    <dbReference type="NCBI Taxonomy" id="3562"/>
</organismHost>
<gene>
    <name type="ORF">ORF3a</name>
</gene>